<proteinExistence type="evidence at transcript level"/>
<protein>
    <recommendedName>
        <fullName>Lymphotoxin-alpha</fullName>
        <shortName>LT-alpha</shortName>
    </recommendedName>
    <alternativeName>
        <fullName>TNF-beta</fullName>
    </alternativeName>
    <alternativeName>
        <fullName>Tumor necrosis factor ligand superfamily member 1</fullName>
    </alternativeName>
</protein>
<gene>
    <name type="primary">LTA</name>
    <name type="synonym">TNFB</name>
    <name type="synonym">TNFSF1</name>
</gene>
<sequence length="204" mass="22099">MTPPGRLYLLRVCSTPPLLLLGLLLALPLEAQGLRGIGLTPSAAQPAHQQLPTPFTRGTLKPAAHLVGDPSTQDSLRWRANTDRAFLRHGFSLSNNSLLVPTSGLYFVYSQVVFSGRGCFPRATPTPLYLAHEVQLFSPQYPFHVPLLSAQKSVCPGPQGPWVRSVYQGAVFLLTRGDQLSTHTDGISHLLLSPSSVFFGAFAL</sequence>
<name>TNFB_BOVIN</name>
<organism>
    <name type="scientific">Bos taurus</name>
    <name type="common">Bovine</name>
    <dbReference type="NCBI Taxonomy" id="9913"/>
    <lineage>
        <taxon>Eukaryota</taxon>
        <taxon>Metazoa</taxon>
        <taxon>Chordata</taxon>
        <taxon>Craniata</taxon>
        <taxon>Vertebrata</taxon>
        <taxon>Euteleostomi</taxon>
        <taxon>Mammalia</taxon>
        <taxon>Eutheria</taxon>
        <taxon>Laurasiatheria</taxon>
        <taxon>Artiodactyla</taxon>
        <taxon>Ruminantia</taxon>
        <taxon>Pecora</taxon>
        <taxon>Bovidae</taxon>
        <taxon>Bovinae</taxon>
        <taxon>Bos</taxon>
    </lineage>
</organism>
<reference key="1">
    <citation type="journal article" date="1993" name="Cytokine">
        <title>Cloning and characterization of the tandemly arranged bovine lymphotoxin and tumour necrosis factor-alpha genes.</title>
        <authorList>
            <person name="Cludts I."/>
            <person name="Cleuter Y."/>
            <person name="Kettmann R."/>
            <person name="Burny A."/>
            <person name="Droogmans L."/>
        </authorList>
    </citation>
    <scope>NUCLEOTIDE SEQUENCE [GENOMIC DNA]</scope>
</reference>
<reference key="2">
    <citation type="submission" date="2006-04" db="EMBL/GenBank/DDBJ databases">
        <authorList>
            <consortium name="NIH - Mammalian Gene Collection (MGC) project"/>
        </authorList>
    </citation>
    <scope>NUCLEOTIDE SEQUENCE [LARGE SCALE MRNA]</scope>
    <source>
        <strain>Hereford</strain>
        <tissue>Uterus</tissue>
    </source>
</reference>
<keyword id="KW-0202">Cytokine</keyword>
<keyword id="KW-1015">Disulfide bond</keyword>
<keyword id="KW-0325">Glycoprotein</keyword>
<keyword id="KW-0472">Membrane</keyword>
<keyword id="KW-1185">Reference proteome</keyword>
<keyword id="KW-0964">Secreted</keyword>
<keyword id="KW-0732">Signal</keyword>
<dbReference type="EMBL" id="Z14137">
    <property type="protein sequence ID" value="CAA78510.1"/>
    <property type="molecule type" value="Genomic_DNA"/>
</dbReference>
<dbReference type="EMBL" id="BC114670">
    <property type="protein sequence ID" value="AAI14671.1"/>
    <property type="molecule type" value="mRNA"/>
</dbReference>
<dbReference type="PIR" id="I46046">
    <property type="entry name" value="S24641"/>
</dbReference>
<dbReference type="RefSeq" id="NP_001013419.1">
    <property type="nucleotide sequence ID" value="NM_001013401.2"/>
</dbReference>
<dbReference type="RefSeq" id="XP_005223643.1">
    <property type="nucleotide sequence ID" value="XM_005223586.5"/>
</dbReference>
<dbReference type="SMR" id="Q06600"/>
<dbReference type="FunCoup" id="Q06600">
    <property type="interactions" value="46"/>
</dbReference>
<dbReference type="STRING" id="9913.ENSBTAP00000000018"/>
<dbReference type="GlyCosmos" id="Q06600">
    <property type="glycosylation" value="1 site, No reported glycans"/>
</dbReference>
<dbReference type="GlyGen" id="Q06600">
    <property type="glycosylation" value="1 site"/>
</dbReference>
<dbReference type="PaxDb" id="9913-ENSBTAP00000000018"/>
<dbReference type="Ensembl" id="ENSBTAT00000000018.4">
    <property type="protein sequence ID" value="ENSBTAP00000000018.3"/>
    <property type="gene ID" value="ENSBTAG00000000016.4"/>
</dbReference>
<dbReference type="GeneID" id="280845"/>
<dbReference type="KEGG" id="bta:280845"/>
<dbReference type="CTD" id="4049"/>
<dbReference type="VEuPathDB" id="HostDB:ENSBTAG00000000016"/>
<dbReference type="VGNC" id="VGNC:31066">
    <property type="gene designation" value="LTA"/>
</dbReference>
<dbReference type="eggNOG" id="ENOG502S4K8">
    <property type="taxonomic scope" value="Eukaryota"/>
</dbReference>
<dbReference type="GeneTree" id="ENSGT01060000248544"/>
<dbReference type="HOGENOM" id="CLU_070352_4_0_1"/>
<dbReference type="InParanoid" id="Q06600"/>
<dbReference type="OMA" id="MEGECKV"/>
<dbReference type="OrthoDB" id="9940698at2759"/>
<dbReference type="TreeFam" id="TF332169"/>
<dbReference type="Reactome" id="R-BTA-5668541">
    <property type="pathway name" value="TNFR2 non-canonical NF-kB pathway"/>
</dbReference>
<dbReference type="Reactome" id="R-BTA-5669034">
    <property type="pathway name" value="TNFs bind their physiological receptors"/>
</dbReference>
<dbReference type="Reactome" id="R-BTA-5676594">
    <property type="pathway name" value="TNF receptor superfamily (TNFSF) members mediating non-canonical NF-kB pathway"/>
</dbReference>
<dbReference type="Proteomes" id="UP000009136">
    <property type="component" value="Chromosome 23"/>
</dbReference>
<dbReference type="Bgee" id="ENSBTAG00000000016">
    <property type="expression patterns" value="Expressed in pharyngeal tonsil and 61 other cell types or tissues"/>
</dbReference>
<dbReference type="GO" id="GO:0005615">
    <property type="term" value="C:extracellular space"/>
    <property type="evidence" value="ECO:0000318"/>
    <property type="project" value="GO_Central"/>
</dbReference>
<dbReference type="GO" id="GO:0016020">
    <property type="term" value="C:membrane"/>
    <property type="evidence" value="ECO:0007669"/>
    <property type="project" value="UniProtKB-SubCell"/>
</dbReference>
<dbReference type="GO" id="GO:0005125">
    <property type="term" value="F:cytokine activity"/>
    <property type="evidence" value="ECO:0000318"/>
    <property type="project" value="GO_Central"/>
</dbReference>
<dbReference type="GO" id="GO:0005164">
    <property type="term" value="F:tumor necrosis factor receptor binding"/>
    <property type="evidence" value="ECO:0007669"/>
    <property type="project" value="InterPro"/>
</dbReference>
<dbReference type="GO" id="GO:0007166">
    <property type="term" value="P:cell surface receptor signaling pathway"/>
    <property type="evidence" value="ECO:0000318"/>
    <property type="project" value="GO_Central"/>
</dbReference>
<dbReference type="GO" id="GO:0050830">
    <property type="term" value="P:defense response to Gram-positive bacterium"/>
    <property type="evidence" value="ECO:0007669"/>
    <property type="project" value="Ensembl"/>
</dbReference>
<dbReference type="GO" id="GO:0006959">
    <property type="term" value="P:humoral immune response"/>
    <property type="evidence" value="ECO:0007669"/>
    <property type="project" value="Ensembl"/>
</dbReference>
<dbReference type="GO" id="GO:0006955">
    <property type="term" value="P:immune response"/>
    <property type="evidence" value="ECO:0000318"/>
    <property type="project" value="GO_Central"/>
</dbReference>
<dbReference type="GO" id="GO:0048535">
    <property type="term" value="P:lymph node development"/>
    <property type="evidence" value="ECO:0007669"/>
    <property type="project" value="Ensembl"/>
</dbReference>
<dbReference type="GO" id="GO:0043123">
    <property type="term" value="P:positive regulation of canonical NF-kappaB signal transduction"/>
    <property type="evidence" value="ECO:0000318"/>
    <property type="project" value="GO_Central"/>
</dbReference>
<dbReference type="GO" id="GO:0002876">
    <property type="term" value="P:positive regulation of chronic inflammatory response to antigenic stimulus"/>
    <property type="evidence" value="ECO:0007669"/>
    <property type="project" value="Ensembl"/>
</dbReference>
<dbReference type="GO" id="GO:2001238">
    <property type="term" value="P:positive regulation of extrinsic apoptotic signaling pathway"/>
    <property type="evidence" value="ECO:0000318"/>
    <property type="project" value="GO_Central"/>
</dbReference>
<dbReference type="GO" id="GO:0002925">
    <property type="term" value="P:positive regulation of humoral immune response mediated by circulating immunoglobulin"/>
    <property type="evidence" value="ECO:0007669"/>
    <property type="project" value="Ensembl"/>
</dbReference>
<dbReference type="GO" id="GO:0032729">
    <property type="term" value="P:positive regulation of type II interferon production"/>
    <property type="evidence" value="ECO:0007669"/>
    <property type="project" value="Ensembl"/>
</dbReference>
<dbReference type="CDD" id="cd00184">
    <property type="entry name" value="TNF"/>
    <property type="match status" value="1"/>
</dbReference>
<dbReference type="FunFam" id="2.60.120.40:FF:000016">
    <property type="entry name" value="Tumor necrosis factor"/>
    <property type="match status" value="1"/>
</dbReference>
<dbReference type="Gene3D" id="2.60.120.40">
    <property type="match status" value="1"/>
</dbReference>
<dbReference type="InterPro" id="IPR006053">
    <property type="entry name" value="TNF"/>
</dbReference>
<dbReference type="InterPro" id="IPR002960">
    <property type="entry name" value="TNF_beta"/>
</dbReference>
<dbReference type="InterPro" id="IPR021184">
    <property type="entry name" value="TNF_CS"/>
</dbReference>
<dbReference type="InterPro" id="IPR006052">
    <property type="entry name" value="TNF_dom"/>
</dbReference>
<dbReference type="InterPro" id="IPR008983">
    <property type="entry name" value="Tumour_necrosis_fac-like_dom"/>
</dbReference>
<dbReference type="PANTHER" id="PTHR11471:SF31">
    <property type="entry name" value="LYMPHOTOXIN-ALPHA"/>
    <property type="match status" value="1"/>
</dbReference>
<dbReference type="PANTHER" id="PTHR11471">
    <property type="entry name" value="TUMOR NECROSIS FACTOR FAMILY MEMBER"/>
    <property type="match status" value="1"/>
</dbReference>
<dbReference type="Pfam" id="PF00229">
    <property type="entry name" value="TNF"/>
    <property type="match status" value="1"/>
</dbReference>
<dbReference type="PRINTS" id="PR01234">
    <property type="entry name" value="TNECROSISFCT"/>
</dbReference>
<dbReference type="PRINTS" id="PR01236">
    <property type="entry name" value="TNFBETA"/>
</dbReference>
<dbReference type="SMART" id="SM00207">
    <property type="entry name" value="TNF"/>
    <property type="match status" value="1"/>
</dbReference>
<dbReference type="SUPFAM" id="SSF49842">
    <property type="entry name" value="TNF-like"/>
    <property type="match status" value="1"/>
</dbReference>
<dbReference type="PROSITE" id="PS00251">
    <property type="entry name" value="THD_1"/>
    <property type="match status" value="1"/>
</dbReference>
<dbReference type="PROSITE" id="PS50049">
    <property type="entry name" value="THD_2"/>
    <property type="match status" value="1"/>
</dbReference>
<evidence type="ECO:0000250" key="1"/>
<evidence type="ECO:0000250" key="2">
    <source>
        <dbReference type="UniProtKB" id="P01374"/>
    </source>
</evidence>
<evidence type="ECO:0000255" key="3"/>
<evidence type="ECO:0000255" key="4">
    <source>
        <dbReference type="PROSITE-ProRule" id="PRU01387"/>
    </source>
</evidence>
<evidence type="ECO:0000305" key="5"/>
<accession>Q06600</accession>
<accession>A4FUB6</accession>
<feature type="signal peptide" evidence="1">
    <location>
        <begin position="1"/>
        <end position="33"/>
    </location>
</feature>
<feature type="chain" id="PRO_0000034461" description="Lymphotoxin-alpha">
    <location>
        <begin position="34"/>
        <end position="204"/>
    </location>
</feature>
<feature type="domain" description="THD" evidence="4">
    <location>
        <begin position="62"/>
        <end position="204"/>
    </location>
</feature>
<feature type="glycosylation site" description="N-linked (GlcNAc...) asparagine" evidence="3">
    <location>
        <position position="95"/>
    </location>
</feature>
<feature type="disulfide bond" evidence="4">
    <location>
        <begin position="119"/>
        <end position="155"/>
    </location>
</feature>
<comment type="function">
    <text evidence="2">Cytokine that in its homotrimeric form binds to TNFRSF1A/TNFR1, TNFRSF1B/TNFBR and TNFRSF14/HVEM (By similarity). In its heterotrimeric form with LTB binds to TNFRSF3/LTBR. Lymphotoxin is produced by lymphocytes and is cytotoxic for a wide range of tumor cells in vitro and in vivo.</text>
</comment>
<comment type="subunit">
    <text evidence="2">Homotrimer, and heterotrimer of either two LTB and one LTA subunits or (less prevalent) two LTA and one LTB subunits. Interacts with TNFRSF14.</text>
</comment>
<comment type="subcellular location">
    <subcellularLocation>
        <location evidence="1">Secreted</location>
    </subcellularLocation>
    <subcellularLocation>
        <location evidence="1">Membrane</location>
    </subcellularLocation>
    <text evidence="1">The homotrimer is secreted. The heterotrimer is membrane-associated.</text>
</comment>
<comment type="similarity">
    <text evidence="5">Belongs to the tumor necrosis factor family.</text>
</comment>